<sequence>MMNVAVTATPSSLLYSPLLLPSQGPNRRMQWKRNGKRRLGTKVAVSGVITAGFELKPPPYPLDALEPHMSRETLDYHWGKHHKTYVENLNKQILGTDLDALSLEEVVLLSYNKGNMLPAFNNAAQAWNHEFFWESIQPGGGGKPTGELLRLIERDFGSFEEFLERFKSAAASNFGSGWTWLAYKANRLDVANAVNPLPKEEDKKLVIVKTPNAVNPLVWDYSPLLTIDTWEHAYYLDFENRRAEYINTFMEKLVSWETVSTRLESAIARAVQREQEGTETEDEENPDDEVPEVYLDSDIDVSEVD</sequence>
<name>SODF2_ARATH</name>
<dbReference type="EC" id="1.15.1.1" evidence="5"/>
<dbReference type="EMBL" id="AB023044">
    <property type="protein sequence ID" value="BAA97372.1"/>
    <property type="molecule type" value="Genomic_DNA"/>
</dbReference>
<dbReference type="EMBL" id="CP002688">
    <property type="protein sequence ID" value="AED96034.1"/>
    <property type="molecule type" value="Genomic_DNA"/>
</dbReference>
<dbReference type="EMBL" id="BT004073">
    <property type="protein sequence ID" value="AAO42100.1"/>
    <property type="molecule type" value="mRNA"/>
</dbReference>
<dbReference type="EMBL" id="BT005116">
    <property type="protein sequence ID" value="AAO50649.1"/>
    <property type="molecule type" value="mRNA"/>
</dbReference>
<dbReference type="EMBL" id="AK228538">
    <property type="protein sequence ID" value="BAF00460.1"/>
    <property type="molecule type" value="mRNA"/>
</dbReference>
<dbReference type="EMBL" id="AY085077">
    <property type="protein sequence ID" value="AAM61633.1"/>
    <property type="molecule type" value="mRNA"/>
</dbReference>
<dbReference type="EMBL" id="Y12641">
    <property type="protein sequence ID" value="CAA73188.1"/>
    <property type="molecule type" value="mRNA"/>
</dbReference>
<dbReference type="RefSeq" id="NP_199923.1">
    <property type="nucleotide sequence ID" value="NM_124489.3"/>
</dbReference>
<dbReference type="PDB" id="7BJK">
    <property type="method" value="X-ray"/>
    <property type="resolution" value="2.25 A"/>
    <property type="chains" value="A/B/C/D/E=47-305"/>
</dbReference>
<dbReference type="PDBsum" id="7BJK"/>
<dbReference type="SMR" id="Q9LU64"/>
<dbReference type="BioGRID" id="20428">
    <property type="interactions" value="10"/>
</dbReference>
<dbReference type="FunCoup" id="Q9LU64">
    <property type="interactions" value="360"/>
</dbReference>
<dbReference type="IntAct" id="Q9LU64">
    <property type="interactions" value="8"/>
</dbReference>
<dbReference type="STRING" id="3702.Q9LU64"/>
<dbReference type="GlyGen" id="Q9LU64">
    <property type="glycosylation" value="1 site"/>
</dbReference>
<dbReference type="iPTMnet" id="Q9LU64"/>
<dbReference type="PaxDb" id="3702-AT5G51100.1"/>
<dbReference type="ProteomicsDB" id="234478"/>
<dbReference type="EnsemblPlants" id="AT5G51100.1">
    <property type="protein sequence ID" value="AT5G51100.1"/>
    <property type="gene ID" value="AT5G51100"/>
</dbReference>
<dbReference type="GeneID" id="835183"/>
<dbReference type="Gramene" id="AT5G51100.1">
    <property type="protein sequence ID" value="AT5G51100.1"/>
    <property type="gene ID" value="AT5G51100"/>
</dbReference>
<dbReference type="KEGG" id="ath:AT5G51100"/>
<dbReference type="Araport" id="AT5G51100"/>
<dbReference type="TAIR" id="AT5G51100">
    <property type="gene designation" value="FSD2"/>
</dbReference>
<dbReference type="eggNOG" id="KOG0876">
    <property type="taxonomic scope" value="Eukaryota"/>
</dbReference>
<dbReference type="HOGENOM" id="CLU_031625_0_0_1"/>
<dbReference type="InParanoid" id="Q9LU64"/>
<dbReference type="OMA" id="VKSPNAM"/>
<dbReference type="PhylomeDB" id="Q9LU64"/>
<dbReference type="BioCyc" id="MetaCyc:AT5G51100-MONOMER"/>
<dbReference type="PRO" id="PR:Q9LU64"/>
<dbReference type="Proteomes" id="UP000006548">
    <property type="component" value="Chromosome 5"/>
</dbReference>
<dbReference type="ExpressionAtlas" id="Q9LU64">
    <property type="expression patterns" value="baseline and differential"/>
</dbReference>
<dbReference type="GO" id="GO:0009507">
    <property type="term" value="C:chloroplast"/>
    <property type="evidence" value="ECO:0000314"/>
    <property type="project" value="TAIR"/>
</dbReference>
<dbReference type="GO" id="GO:0042644">
    <property type="term" value="C:chloroplast nucleoid"/>
    <property type="evidence" value="ECO:0000314"/>
    <property type="project" value="UniProtKB"/>
</dbReference>
<dbReference type="GO" id="GO:0009534">
    <property type="term" value="C:chloroplast thylakoid"/>
    <property type="evidence" value="ECO:0007669"/>
    <property type="project" value="UniProtKB-SubCell"/>
</dbReference>
<dbReference type="GO" id="GO:0009579">
    <property type="term" value="C:thylakoid"/>
    <property type="evidence" value="ECO:0000314"/>
    <property type="project" value="TAIR"/>
</dbReference>
<dbReference type="GO" id="GO:0046872">
    <property type="term" value="F:metal ion binding"/>
    <property type="evidence" value="ECO:0007669"/>
    <property type="project" value="UniProtKB-KW"/>
</dbReference>
<dbReference type="GO" id="GO:0004784">
    <property type="term" value="F:superoxide dismutase activity"/>
    <property type="evidence" value="ECO:0000314"/>
    <property type="project" value="UniProtKB"/>
</dbReference>
<dbReference type="GO" id="GO:0009411">
    <property type="term" value="P:response to UV"/>
    <property type="evidence" value="ECO:0000270"/>
    <property type="project" value="TAIR"/>
</dbReference>
<dbReference type="FunFam" id="1.10.287.990:FF:000002">
    <property type="entry name" value="Superoxide dismutase"/>
    <property type="match status" value="1"/>
</dbReference>
<dbReference type="FunFam" id="3.55.40.20:FF:000005">
    <property type="entry name" value="Superoxide dismutase"/>
    <property type="match status" value="1"/>
</dbReference>
<dbReference type="Gene3D" id="1.10.287.990">
    <property type="entry name" value="Fe,Mn superoxide dismutase (SOD) domain"/>
    <property type="match status" value="1"/>
</dbReference>
<dbReference type="Gene3D" id="3.55.40.20">
    <property type="entry name" value="Iron/manganese superoxide dismutase, C-terminal domain"/>
    <property type="match status" value="1"/>
</dbReference>
<dbReference type="InterPro" id="IPR001189">
    <property type="entry name" value="Mn/Fe_SOD"/>
</dbReference>
<dbReference type="InterPro" id="IPR019833">
    <property type="entry name" value="Mn/Fe_SOD_BS"/>
</dbReference>
<dbReference type="InterPro" id="IPR019832">
    <property type="entry name" value="Mn/Fe_SOD_C"/>
</dbReference>
<dbReference type="InterPro" id="IPR019831">
    <property type="entry name" value="Mn/Fe_SOD_N"/>
</dbReference>
<dbReference type="InterPro" id="IPR036324">
    <property type="entry name" value="Mn/Fe_SOD_N_sf"/>
</dbReference>
<dbReference type="InterPro" id="IPR036314">
    <property type="entry name" value="SOD_C_sf"/>
</dbReference>
<dbReference type="PANTHER" id="PTHR42769">
    <property type="entry name" value="SUPEROXIDE DISMUTASE"/>
    <property type="match status" value="1"/>
</dbReference>
<dbReference type="PANTHER" id="PTHR42769:SF3">
    <property type="entry name" value="SUPEROXIDE DISMUTASE [FE] 2, CHLOROPLASTIC"/>
    <property type="match status" value="1"/>
</dbReference>
<dbReference type="Pfam" id="PF02777">
    <property type="entry name" value="Sod_Fe_C"/>
    <property type="match status" value="2"/>
</dbReference>
<dbReference type="Pfam" id="PF00081">
    <property type="entry name" value="Sod_Fe_N"/>
    <property type="match status" value="1"/>
</dbReference>
<dbReference type="PRINTS" id="PR01703">
    <property type="entry name" value="MNSODISMTASE"/>
</dbReference>
<dbReference type="SUPFAM" id="SSF54719">
    <property type="entry name" value="Fe,Mn superoxide dismutase (SOD), C-terminal domain"/>
    <property type="match status" value="1"/>
</dbReference>
<dbReference type="SUPFAM" id="SSF46609">
    <property type="entry name" value="Fe,Mn superoxide dismutase (SOD), N-terminal domain"/>
    <property type="match status" value="1"/>
</dbReference>
<dbReference type="PROSITE" id="PS00088">
    <property type="entry name" value="SOD_MN"/>
    <property type="match status" value="1"/>
</dbReference>
<proteinExistence type="evidence at protein level"/>
<evidence type="ECO:0000250" key="1"/>
<evidence type="ECO:0000255" key="2"/>
<evidence type="ECO:0000256" key="3">
    <source>
        <dbReference type="SAM" id="MobiDB-lite"/>
    </source>
</evidence>
<evidence type="ECO:0000269" key="4">
    <source>
    </source>
</evidence>
<evidence type="ECO:0000269" key="5">
    <source>
    </source>
</evidence>
<evidence type="ECO:0000269" key="6">
    <source>
    </source>
</evidence>
<evidence type="ECO:0000269" key="7">
    <source>
    </source>
</evidence>
<evidence type="ECO:0000269" key="8">
    <source>
    </source>
</evidence>
<evidence type="ECO:0000305" key="9"/>
<evidence type="ECO:0007829" key="10">
    <source>
        <dbReference type="PDB" id="7BJK"/>
    </source>
</evidence>
<comment type="function">
    <text evidence="1 5">Destroys superoxide anion radicals which are normally produced within the cells and which are toxic to biological systems (By similarity). Plays important role in chloroplast development, particularly in the maintenance of thylakoids membranes. Seems to act as a heterodimer with FSD3.</text>
</comment>
<comment type="catalytic activity">
    <reaction evidence="5">
        <text>2 superoxide + 2 H(+) = H2O2 + O2</text>
        <dbReference type="Rhea" id="RHEA:20696"/>
        <dbReference type="ChEBI" id="CHEBI:15378"/>
        <dbReference type="ChEBI" id="CHEBI:15379"/>
        <dbReference type="ChEBI" id="CHEBI:16240"/>
        <dbReference type="ChEBI" id="CHEBI:18421"/>
        <dbReference type="EC" id="1.15.1.1"/>
    </reaction>
</comment>
<comment type="cofactor">
    <cofactor evidence="1">
        <name>Fe cation</name>
        <dbReference type="ChEBI" id="CHEBI:24875"/>
    </cofactor>
    <text evidence="1">Binds 1 Fe cation per subunit.</text>
</comment>
<comment type="activity regulation">
    <text evidence="6">Activated by cpn20/cpn21 (in vitro).</text>
</comment>
<comment type="subunit">
    <text evidence="5 7">Heterodimer with FSD3 (PubMed:18996978). Interacts with MRL7 and PRDA1 (PubMed:24132784).</text>
</comment>
<comment type="interaction">
    <interactant intactId="EBI-4424866">
        <id>Q9LU64</id>
    </interactant>
    <interactant intactId="EBI-4430441">
        <id>Q9FMX0</id>
        <label>FSD3</label>
    </interactant>
    <organismsDiffer>false</organismsDiffer>
    <experiments>7</experiments>
</comment>
<comment type="subcellular location">
    <subcellularLocation>
        <location evidence="5">Plastid</location>
        <location evidence="5">Chloroplast thylakoid</location>
    </subcellularLocation>
</comment>
<comment type="induction">
    <text evidence="4 8">By UV-B treatment. Induced by salt stress.</text>
</comment>
<comment type="disruption phenotype">
    <text evidence="5">Pale green phenotype. Abnormal plastids, highly vacuolated and without internal membrane structures like thylakoids.</text>
</comment>
<comment type="similarity">
    <text evidence="9">Belongs to the iron/manganese superoxide dismutase family.</text>
</comment>
<organism>
    <name type="scientific">Arabidopsis thaliana</name>
    <name type="common">Mouse-ear cress</name>
    <dbReference type="NCBI Taxonomy" id="3702"/>
    <lineage>
        <taxon>Eukaryota</taxon>
        <taxon>Viridiplantae</taxon>
        <taxon>Streptophyta</taxon>
        <taxon>Embryophyta</taxon>
        <taxon>Tracheophyta</taxon>
        <taxon>Spermatophyta</taxon>
        <taxon>Magnoliopsida</taxon>
        <taxon>eudicotyledons</taxon>
        <taxon>Gunneridae</taxon>
        <taxon>Pentapetalae</taxon>
        <taxon>rosids</taxon>
        <taxon>malvids</taxon>
        <taxon>Brassicales</taxon>
        <taxon>Brassicaceae</taxon>
        <taxon>Camelineae</taxon>
        <taxon>Arabidopsis</taxon>
    </lineage>
</organism>
<protein>
    <recommendedName>
        <fullName>Superoxide dismutase [Fe] 2, chloroplastic</fullName>
        <ecNumber evidence="5">1.15.1.1</ecNumber>
    </recommendedName>
    <alternativeName>
        <fullName>Protein ALBINO OR PALE GREEN 8</fullName>
    </alternativeName>
    <alternativeName>
        <fullName>Protein FE SUPEROXIDE DISMUTASE 2</fullName>
    </alternativeName>
</protein>
<reference key="1">
    <citation type="journal article" date="2000" name="DNA Res.">
        <title>Structural analysis of Arabidopsis thaliana chromosome 5. X. Sequence features of the regions of 3,076,755 bp covered by sixty P1 and TAC clones.</title>
        <authorList>
            <person name="Sato S."/>
            <person name="Nakamura Y."/>
            <person name="Kaneko T."/>
            <person name="Katoh T."/>
            <person name="Asamizu E."/>
            <person name="Kotani H."/>
            <person name="Tabata S."/>
        </authorList>
    </citation>
    <scope>NUCLEOTIDE SEQUENCE [LARGE SCALE GENOMIC DNA]</scope>
    <source>
        <strain>cv. Columbia</strain>
    </source>
</reference>
<reference key="2">
    <citation type="journal article" date="2017" name="Plant J.">
        <title>Araport11: a complete reannotation of the Arabidopsis thaliana reference genome.</title>
        <authorList>
            <person name="Cheng C.Y."/>
            <person name="Krishnakumar V."/>
            <person name="Chan A.P."/>
            <person name="Thibaud-Nissen F."/>
            <person name="Schobel S."/>
            <person name="Town C.D."/>
        </authorList>
    </citation>
    <scope>GENOME REANNOTATION</scope>
    <source>
        <strain>cv. Columbia</strain>
    </source>
</reference>
<reference key="3">
    <citation type="journal article" date="2003" name="Science">
        <title>Empirical analysis of transcriptional activity in the Arabidopsis genome.</title>
        <authorList>
            <person name="Yamada K."/>
            <person name="Lim J."/>
            <person name="Dale J.M."/>
            <person name="Chen H."/>
            <person name="Shinn P."/>
            <person name="Palm C.J."/>
            <person name="Southwick A.M."/>
            <person name="Wu H.C."/>
            <person name="Kim C.J."/>
            <person name="Nguyen M."/>
            <person name="Pham P.K."/>
            <person name="Cheuk R.F."/>
            <person name="Karlin-Newmann G."/>
            <person name="Liu S.X."/>
            <person name="Lam B."/>
            <person name="Sakano H."/>
            <person name="Wu T."/>
            <person name="Yu G."/>
            <person name="Miranda M."/>
            <person name="Quach H.L."/>
            <person name="Tripp M."/>
            <person name="Chang C.H."/>
            <person name="Lee J.M."/>
            <person name="Toriumi M.J."/>
            <person name="Chan M.M."/>
            <person name="Tang C.C."/>
            <person name="Onodera C.S."/>
            <person name="Deng J.M."/>
            <person name="Akiyama K."/>
            <person name="Ansari Y."/>
            <person name="Arakawa T."/>
            <person name="Banh J."/>
            <person name="Banno F."/>
            <person name="Bowser L."/>
            <person name="Brooks S.Y."/>
            <person name="Carninci P."/>
            <person name="Chao Q."/>
            <person name="Choy N."/>
            <person name="Enju A."/>
            <person name="Goldsmith A.D."/>
            <person name="Gurjal M."/>
            <person name="Hansen N.F."/>
            <person name="Hayashizaki Y."/>
            <person name="Johnson-Hopson C."/>
            <person name="Hsuan V.W."/>
            <person name="Iida K."/>
            <person name="Karnes M."/>
            <person name="Khan S."/>
            <person name="Koesema E."/>
            <person name="Ishida J."/>
            <person name="Jiang P.X."/>
            <person name="Jones T."/>
            <person name="Kawai J."/>
            <person name="Kamiya A."/>
            <person name="Meyers C."/>
            <person name="Nakajima M."/>
            <person name="Narusaka M."/>
            <person name="Seki M."/>
            <person name="Sakurai T."/>
            <person name="Satou M."/>
            <person name="Tamse R."/>
            <person name="Vaysberg M."/>
            <person name="Wallender E.K."/>
            <person name="Wong C."/>
            <person name="Yamamura Y."/>
            <person name="Yuan S."/>
            <person name="Shinozaki K."/>
            <person name="Davis R.W."/>
            <person name="Theologis A."/>
            <person name="Ecker J.R."/>
        </authorList>
    </citation>
    <scope>NUCLEOTIDE SEQUENCE [LARGE SCALE MRNA]</scope>
    <source>
        <strain>cv. Columbia</strain>
    </source>
</reference>
<reference key="4">
    <citation type="submission" date="2006-07" db="EMBL/GenBank/DDBJ databases">
        <title>Large-scale analysis of RIKEN Arabidopsis full-length (RAFL) cDNAs.</title>
        <authorList>
            <person name="Totoki Y."/>
            <person name="Seki M."/>
            <person name="Ishida J."/>
            <person name="Nakajima M."/>
            <person name="Enju A."/>
            <person name="Kamiya A."/>
            <person name="Narusaka M."/>
            <person name="Shin-i T."/>
            <person name="Nakagawa M."/>
            <person name="Sakamoto N."/>
            <person name="Oishi K."/>
            <person name="Kohara Y."/>
            <person name="Kobayashi M."/>
            <person name="Toyoda A."/>
            <person name="Sakaki Y."/>
            <person name="Sakurai T."/>
            <person name="Iida K."/>
            <person name="Akiyama K."/>
            <person name="Satou M."/>
            <person name="Toyoda T."/>
            <person name="Konagaya A."/>
            <person name="Carninci P."/>
            <person name="Kawai J."/>
            <person name="Hayashizaki Y."/>
            <person name="Shinozaki K."/>
        </authorList>
    </citation>
    <scope>NUCLEOTIDE SEQUENCE [LARGE SCALE MRNA]</scope>
    <source>
        <strain>cv. Columbia</strain>
    </source>
</reference>
<reference key="5">
    <citation type="submission" date="2002-03" db="EMBL/GenBank/DDBJ databases">
        <title>Full-length cDNA from Arabidopsis thaliana.</title>
        <authorList>
            <person name="Brover V.V."/>
            <person name="Troukhan M.E."/>
            <person name="Alexandrov N.A."/>
            <person name="Lu Y.-P."/>
            <person name="Flavell R.B."/>
            <person name="Feldmann K.A."/>
        </authorList>
    </citation>
    <scope>NUCLEOTIDE SEQUENCE [LARGE SCALE MRNA]</scope>
</reference>
<reference key="6">
    <citation type="submission" date="1997-04" db="EMBL/GenBank/DDBJ databases">
        <authorList>
            <person name="Van Breusegem F."/>
            <person name="Villaroel R."/>
            <person name="Van Montagu M."/>
            <person name="Inze D."/>
        </authorList>
    </citation>
    <scope>NUCLEOTIDE SEQUENCE [MRNA] OF 152-305</scope>
    <source>
        <strain>cv. Columbia</strain>
    </source>
</reference>
<reference key="7">
    <citation type="journal article" date="1998" name="Plant Physiol.">
        <title>Superoxide dismutase in Arabidopsis: an eclectic enzyme family with disparate regulation and protein localization.</title>
        <authorList>
            <person name="Kliebenstein D.J."/>
            <person name="Monde R.A."/>
            <person name="Last R.L."/>
        </authorList>
    </citation>
    <scope>INDUCTION BY UV-B</scope>
    <scope>GENE FAMILY</scope>
</reference>
<reference key="8">
    <citation type="journal article" date="2008" name="Physiol. Plantarum">
        <title>Long-term effects of mild salt stress on growth, ion accumulation and superoxide dismutase expression of Arabidopsis rosette leaves.</title>
        <authorList>
            <person name="Attia H."/>
            <person name="Arnaud N."/>
            <person name="Karray N."/>
            <person name="Lachaal M."/>
        </authorList>
    </citation>
    <scope>INDUCTION BY SALT</scope>
</reference>
<reference key="9">
    <citation type="journal article" date="2008" name="Plant Cell">
        <title>A heterocomplex of iron superoxide dismutases defends chloroplast nucleoids against oxidative stress and is essential for chloroplast development in Arabidopsis.</title>
        <authorList>
            <person name="Myouga F."/>
            <person name="Hosoda C."/>
            <person name="Umezawa T."/>
            <person name="Iizumi H."/>
            <person name="Kuromori T."/>
            <person name="Motohashi R."/>
            <person name="Shono Y."/>
            <person name="Nagata N."/>
            <person name="Ikeuchi M."/>
            <person name="Shinozaki K."/>
        </authorList>
    </citation>
    <scope>FUNCTION</scope>
    <scope>CATALYTIC ACTIVITY</scope>
    <scope>DISRUPTION PHENOTYPE</scope>
    <scope>SUBUNIT</scope>
    <scope>SUBCELLULAR LOCATION</scope>
</reference>
<reference key="10">
    <citation type="journal article" date="2013" name="New Phytol.">
        <title>CHAPERONIN 20 mediates iron superoxide dismutase (FeSOD) activity independent of its co-chaperonin role in Arabidopsis chloroplasts.</title>
        <authorList>
            <person name="Kuo W.Y."/>
            <person name="Huang C.H."/>
            <person name="Liu A.C."/>
            <person name="Cheng C.P."/>
            <person name="Li S.H."/>
            <person name="Chang W.C."/>
            <person name="Weiss C."/>
            <person name="Azem A."/>
            <person name="Jinn T.L."/>
        </authorList>
    </citation>
    <scope>ACTIVITY REGULATION</scope>
</reference>
<reference key="11">
    <citation type="journal article" date="2013" name="Plant Cell Physiol.">
        <title>PRDA1, a novel chloroplast nucleoid protein, is required for early chloroplast development and is involved in the regulation of plastid gene expression in Arabidopsis.</title>
        <authorList>
            <person name="Qiao J."/>
            <person name="Li J."/>
            <person name="Chu W."/>
            <person name="Luo M."/>
        </authorList>
    </citation>
    <scope>INTERACTION WITH MRL7 AND PRDA1</scope>
</reference>
<feature type="transit peptide" description="Chloroplast" evidence="2">
    <location>
        <begin position="1"/>
        <end position="46"/>
    </location>
</feature>
<feature type="chain" id="PRO_0000421265" description="Superoxide dismutase [Fe] 2, chloroplastic">
    <location>
        <begin position="47"/>
        <end position="305"/>
    </location>
</feature>
<feature type="region of interest" description="Disordered" evidence="3">
    <location>
        <begin position="270"/>
        <end position="305"/>
    </location>
</feature>
<feature type="compositionally biased region" description="Acidic residues" evidence="3">
    <location>
        <begin position="277"/>
        <end position="305"/>
    </location>
</feature>
<feature type="binding site" evidence="1">
    <location>
        <position position="77"/>
    </location>
    <ligand>
        <name>Fe cation</name>
        <dbReference type="ChEBI" id="CHEBI:24875"/>
    </ligand>
</feature>
<feature type="binding site" evidence="1">
    <location>
        <position position="129"/>
    </location>
    <ligand>
        <name>Fe cation</name>
        <dbReference type="ChEBI" id="CHEBI:24875"/>
    </ligand>
</feature>
<feature type="binding site" evidence="1">
    <location>
        <position position="228"/>
    </location>
    <ligand>
        <name>Fe cation</name>
        <dbReference type="ChEBI" id="CHEBI:24875"/>
    </ligand>
</feature>
<feature type="binding site" evidence="1">
    <location>
        <position position="232"/>
    </location>
    <ligand>
        <name>Fe cation</name>
        <dbReference type="ChEBI" id="CHEBI:24875"/>
    </ligand>
</feature>
<feature type="turn" evidence="10">
    <location>
        <begin position="62"/>
        <end position="68"/>
    </location>
</feature>
<feature type="helix" evidence="10">
    <location>
        <begin position="71"/>
        <end position="77"/>
    </location>
</feature>
<feature type="turn" evidence="10">
    <location>
        <begin position="78"/>
        <end position="80"/>
    </location>
</feature>
<feature type="helix" evidence="10">
    <location>
        <begin position="81"/>
        <end position="93"/>
    </location>
</feature>
<feature type="helix" evidence="10">
    <location>
        <begin position="98"/>
        <end position="100"/>
    </location>
</feature>
<feature type="helix" evidence="10">
    <location>
        <begin position="103"/>
        <end position="111"/>
    </location>
</feature>
<feature type="helix" evidence="10">
    <location>
        <begin position="112"/>
        <end position="114"/>
    </location>
</feature>
<feature type="helix" evidence="10">
    <location>
        <begin position="120"/>
        <end position="134"/>
    </location>
</feature>
<feature type="helix" evidence="10">
    <location>
        <begin position="146"/>
        <end position="156"/>
    </location>
</feature>
<feature type="helix" evidence="10">
    <location>
        <begin position="159"/>
        <end position="172"/>
    </location>
</feature>
<feature type="strand" evidence="10">
    <location>
        <begin position="175"/>
        <end position="183"/>
    </location>
</feature>
<feature type="strand" evidence="10">
    <location>
        <begin position="205"/>
        <end position="211"/>
    </location>
</feature>
<feature type="helix" evidence="10">
    <location>
        <begin position="216"/>
        <end position="219"/>
    </location>
</feature>
<feature type="strand" evidence="10">
    <location>
        <begin position="222"/>
        <end position="228"/>
    </location>
</feature>
<feature type="helix" evidence="10">
    <location>
        <begin position="231"/>
        <end position="233"/>
    </location>
</feature>
<feature type="helix" evidence="10">
    <location>
        <begin position="235"/>
        <end position="238"/>
    </location>
</feature>
<feature type="helix" evidence="10">
    <location>
        <begin position="242"/>
        <end position="252"/>
    </location>
</feature>
<feature type="helix" evidence="10">
    <location>
        <begin position="256"/>
        <end position="274"/>
    </location>
</feature>
<accession>Q9LU64</accession>
<accession>O04879</accession>
<keyword id="KW-0002">3D-structure</keyword>
<keyword id="KW-0150">Chloroplast</keyword>
<keyword id="KW-0408">Iron</keyword>
<keyword id="KW-0479">Metal-binding</keyword>
<keyword id="KW-0560">Oxidoreductase</keyword>
<keyword id="KW-0934">Plastid</keyword>
<keyword id="KW-1185">Reference proteome</keyword>
<keyword id="KW-0677">Repeat</keyword>
<keyword id="KW-0793">Thylakoid</keyword>
<keyword id="KW-0809">Transit peptide</keyword>
<gene>
    <name type="primary">FSD2</name>
    <name type="synonym">APG8</name>
    <name type="ordered locus">At5g51100</name>
    <name type="ORF">MWD22.4</name>
</gene>